<organism>
    <name type="scientific">Anaeromyxobacter sp. (strain K)</name>
    <dbReference type="NCBI Taxonomy" id="447217"/>
    <lineage>
        <taxon>Bacteria</taxon>
        <taxon>Pseudomonadati</taxon>
        <taxon>Myxococcota</taxon>
        <taxon>Myxococcia</taxon>
        <taxon>Myxococcales</taxon>
        <taxon>Cystobacterineae</taxon>
        <taxon>Anaeromyxobacteraceae</taxon>
        <taxon>Anaeromyxobacter</taxon>
    </lineage>
</organism>
<feature type="chain" id="PRO_1000141957" description="Large ribosomal subunit protein uL24">
    <location>
        <begin position="1"/>
        <end position="106"/>
    </location>
</feature>
<feature type="region of interest" description="Disordered" evidence="2">
    <location>
        <begin position="84"/>
        <end position="106"/>
    </location>
</feature>
<feature type="compositionally biased region" description="Basic and acidic residues" evidence="2">
    <location>
        <begin position="84"/>
        <end position="97"/>
    </location>
</feature>
<keyword id="KW-0687">Ribonucleoprotein</keyword>
<keyword id="KW-0689">Ribosomal protein</keyword>
<keyword id="KW-0694">RNA-binding</keyword>
<keyword id="KW-0699">rRNA-binding</keyword>
<evidence type="ECO:0000255" key="1">
    <source>
        <dbReference type="HAMAP-Rule" id="MF_01326"/>
    </source>
</evidence>
<evidence type="ECO:0000256" key="2">
    <source>
        <dbReference type="SAM" id="MobiDB-lite"/>
    </source>
</evidence>
<evidence type="ECO:0000305" key="3"/>
<reference key="1">
    <citation type="submission" date="2008-08" db="EMBL/GenBank/DDBJ databases">
        <title>Complete sequence of Anaeromyxobacter sp. K.</title>
        <authorList>
            <consortium name="US DOE Joint Genome Institute"/>
            <person name="Lucas S."/>
            <person name="Copeland A."/>
            <person name="Lapidus A."/>
            <person name="Glavina del Rio T."/>
            <person name="Dalin E."/>
            <person name="Tice H."/>
            <person name="Bruce D."/>
            <person name="Goodwin L."/>
            <person name="Pitluck S."/>
            <person name="Saunders E."/>
            <person name="Brettin T."/>
            <person name="Detter J.C."/>
            <person name="Han C."/>
            <person name="Larimer F."/>
            <person name="Land M."/>
            <person name="Hauser L."/>
            <person name="Kyrpides N."/>
            <person name="Ovchinnikiva G."/>
            <person name="Beliaev A."/>
        </authorList>
    </citation>
    <scope>NUCLEOTIDE SEQUENCE [LARGE SCALE GENOMIC DNA]</scope>
    <source>
        <strain>K</strain>
    </source>
</reference>
<accession>B4UBB0</accession>
<dbReference type="EMBL" id="CP001131">
    <property type="protein sequence ID" value="ACG73172.1"/>
    <property type="molecule type" value="Genomic_DNA"/>
</dbReference>
<dbReference type="RefSeq" id="WP_012525980.1">
    <property type="nucleotide sequence ID" value="NC_011145.1"/>
</dbReference>
<dbReference type="SMR" id="B4UBB0"/>
<dbReference type="KEGG" id="ank:AnaeK_1944"/>
<dbReference type="HOGENOM" id="CLU_093315_2_3_7"/>
<dbReference type="OrthoDB" id="9807419at2"/>
<dbReference type="Proteomes" id="UP000001871">
    <property type="component" value="Chromosome"/>
</dbReference>
<dbReference type="GO" id="GO:1990904">
    <property type="term" value="C:ribonucleoprotein complex"/>
    <property type="evidence" value="ECO:0007669"/>
    <property type="project" value="UniProtKB-KW"/>
</dbReference>
<dbReference type="GO" id="GO:0005840">
    <property type="term" value="C:ribosome"/>
    <property type="evidence" value="ECO:0007669"/>
    <property type="project" value="UniProtKB-KW"/>
</dbReference>
<dbReference type="GO" id="GO:0019843">
    <property type="term" value="F:rRNA binding"/>
    <property type="evidence" value="ECO:0007669"/>
    <property type="project" value="UniProtKB-UniRule"/>
</dbReference>
<dbReference type="GO" id="GO:0003735">
    <property type="term" value="F:structural constituent of ribosome"/>
    <property type="evidence" value="ECO:0007669"/>
    <property type="project" value="InterPro"/>
</dbReference>
<dbReference type="GO" id="GO:0006412">
    <property type="term" value="P:translation"/>
    <property type="evidence" value="ECO:0007669"/>
    <property type="project" value="UniProtKB-UniRule"/>
</dbReference>
<dbReference type="CDD" id="cd06089">
    <property type="entry name" value="KOW_RPL26"/>
    <property type="match status" value="1"/>
</dbReference>
<dbReference type="Gene3D" id="2.30.30.30">
    <property type="match status" value="1"/>
</dbReference>
<dbReference type="HAMAP" id="MF_01326_B">
    <property type="entry name" value="Ribosomal_uL24_B"/>
    <property type="match status" value="1"/>
</dbReference>
<dbReference type="InterPro" id="IPR005824">
    <property type="entry name" value="KOW"/>
</dbReference>
<dbReference type="InterPro" id="IPR014722">
    <property type="entry name" value="Rib_uL2_dom2"/>
</dbReference>
<dbReference type="InterPro" id="IPR003256">
    <property type="entry name" value="Ribosomal_uL24"/>
</dbReference>
<dbReference type="InterPro" id="IPR005825">
    <property type="entry name" value="Ribosomal_uL24_CS"/>
</dbReference>
<dbReference type="InterPro" id="IPR041988">
    <property type="entry name" value="Ribosomal_uL24_KOW"/>
</dbReference>
<dbReference type="InterPro" id="IPR008991">
    <property type="entry name" value="Translation_prot_SH3-like_sf"/>
</dbReference>
<dbReference type="NCBIfam" id="TIGR01079">
    <property type="entry name" value="rplX_bact"/>
    <property type="match status" value="1"/>
</dbReference>
<dbReference type="PANTHER" id="PTHR12903">
    <property type="entry name" value="MITOCHONDRIAL RIBOSOMAL PROTEIN L24"/>
    <property type="match status" value="1"/>
</dbReference>
<dbReference type="Pfam" id="PF00467">
    <property type="entry name" value="KOW"/>
    <property type="match status" value="1"/>
</dbReference>
<dbReference type="Pfam" id="PF17136">
    <property type="entry name" value="ribosomal_L24"/>
    <property type="match status" value="1"/>
</dbReference>
<dbReference type="SMART" id="SM00739">
    <property type="entry name" value="KOW"/>
    <property type="match status" value="1"/>
</dbReference>
<dbReference type="SUPFAM" id="SSF50104">
    <property type="entry name" value="Translation proteins SH3-like domain"/>
    <property type="match status" value="1"/>
</dbReference>
<dbReference type="PROSITE" id="PS01108">
    <property type="entry name" value="RIBOSOMAL_L24"/>
    <property type="match status" value="1"/>
</dbReference>
<comment type="function">
    <text evidence="1">One of two assembly initiator proteins, it binds directly to the 5'-end of the 23S rRNA, where it nucleates assembly of the 50S subunit.</text>
</comment>
<comment type="function">
    <text evidence="1">One of the proteins that surrounds the polypeptide exit tunnel on the outside of the subunit.</text>
</comment>
<comment type="subunit">
    <text evidence="1">Part of the 50S ribosomal subunit.</text>
</comment>
<comment type="similarity">
    <text evidence="1">Belongs to the universal ribosomal protein uL24 family.</text>
</comment>
<proteinExistence type="inferred from homology"/>
<gene>
    <name evidence="1" type="primary">rplX</name>
    <name type="ordered locus">AnaeK_1944</name>
</gene>
<sequence>MAEIRKGDTVKVIAGKEKGKSGRVLEVLREDGRVRVEKLMTVKRHQKKGRSQANPEGGILEMAGTIAISSVMVVGKDEKPVRREKIGRELGAKEKARLQKRKAAAK</sequence>
<protein>
    <recommendedName>
        <fullName evidence="1">Large ribosomal subunit protein uL24</fullName>
    </recommendedName>
    <alternativeName>
        <fullName evidence="3">50S ribosomal protein L24</fullName>
    </alternativeName>
</protein>
<name>RL24_ANASK</name>